<organism>
    <name type="scientific">Gloeobacter violaceus (strain ATCC 29082 / PCC 7421)</name>
    <dbReference type="NCBI Taxonomy" id="251221"/>
    <lineage>
        <taxon>Bacteria</taxon>
        <taxon>Bacillati</taxon>
        <taxon>Cyanobacteriota</taxon>
        <taxon>Cyanophyceae</taxon>
        <taxon>Gloeobacterales</taxon>
        <taxon>Gloeobacteraceae</taxon>
        <taxon>Gloeobacter</taxon>
    </lineage>
</organism>
<protein>
    <recommendedName>
        <fullName evidence="1">Glycerol-3-phosphate dehydrogenase [NAD(P)+]</fullName>
        <ecNumber evidence="1">1.1.1.94</ecNumber>
    </recommendedName>
    <alternativeName>
        <fullName evidence="1">NAD(P)(+)-dependent glycerol-3-phosphate dehydrogenase</fullName>
    </alternativeName>
    <alternativeName>
        <fullName evidence="1">NAD(P)H-dependent dihydroxyacetone-phosphate reductase</fullName>
    </alternativeName>
</protein>
<dbReference type="EC" id="1.1.1.94" evidence="1"/>
<dbReference type="EMBL" id="BA000045">
    <property type="protein sequence ID" value="BAC91608.1"/>
    <property type="molecule type" value="Genomic_DNA"/>
</dbReference>
<dbReference type="RefSeq" id="NP_926613.1">
    <property type="nucleotide sequence ID" value="NC_005125.1"/>
</dbReference>
<dbReference type="RefSeq" id="WP_011143656.1">
    <property type="nucleotide sequence ID" value="NC_005125.1"/>
</dbReference>
<dbReference type="SMR" id="Q7NF59"/>
<dbReference type="FunCoup" id="Q7NF59">
    <property type="interactions" value="271"/>
</dbReference>
<dbReference type="STRING" id="251221.gene:10761182"/>
<dbReference type="EnsemblBacteria" id="BAC91608">
    <property type="protein sequence ID" value="BAC91608"/>
    <property type="gene ID" value="BAC91608"/>
</dbReference>
<dbReference type="KEGG" id="gvi:glr3667"/>
<dbReference type="PATRIC" id="fig|251221.4.peg.3702"/>
<dbReference type="eggNOG" id="COG0240">
    <property type="taxonomic scope" value="Bacteria"/>
</dbReference>
<dbReference type="HOGENOM" id="CLU_033449_0_2_3"/>
<dbReference type="InParanoid" id="Q7NF59"/>
<dbReference type="OrthoDB" id="9812273at2"/>
<dbReference type="PhylomeDB" id="Q7NF59"/>
<dbReference type="UniPathway" id="UPA00940"/>
<dbReference type="Proteomes" id="UP000000557">
    <property type="component" value="Chromosome"/>
</dbReference>
<dbReference type="GO" id="GO:0005829">
    <property type="term" value="C:cytosol"/>
    <property type="evidence" value="ECO:0000318"/>
    <property type="project" value="GO_Central"/>
</dbReference>
<dbReference type="GO" id="GO:0047952">
    <property type="term" value="F:glycerol-3-phosphate dehydrogenase [NAD(P)+] activity"/>
    <property type="evidence" value="ECO:0000318"/>
    <property type="project" value="GO_Central"/>
</dbReference>
<dbReference type="GO" id="GO:0051287">
    <property type="term" value="F:NAD binding"/>
    <property type="evidence" value="ECO:0007669"/>
    <property type="project" value="InterPro"/>
</dbReference>
<dbReference type="GO" id="GO:0005975">
    <property type="term" value="P:carbohydrate metabolic process"/>
    <property type="evidence" value="ECO:0007669"/>
    <property type="project" value="InterPro"/>
</dbReference>
<dbReference type="GO" id="GO:0046167">
    <property type="term" value="P:glycerol-3-phosphate biosynthetic process"/>
    <property type="evidence" value="ECO:0007669"/>
    <property type="project" value="UniProtKB-UniRule"/>
</dbReference>
<dbReference type="GO" id="GO:0046168">
    <property type="term" value="P:glycerol-3-phosphate catabolic process"/>
    <property type="evidence" value="ECO:0007669"/>
    <property type="project" value="InterPro"/>
</dbReference>
<dbReference type="GO" id="GO:0006072">
    <property type="term" value="P:glycerol-3-phosphate metabolic process"/>
    <property type="evidence" value="ECO:0000318"/>
    <property type="project" value="GO_Central"/>
</dbReference>
<dbReference type="GO" id="GO:0006650">
    <property type="term" value="P:glycerophospholipid metabolic process"/>
    <property type="evidence" value="ECO:0007669"/>
    <property type="project" value="UniProtKB-UniRule"/>
</dbReference>
<dbReference type="GO" id="GO:0008654">
    <property type="term" value="P:phospholipid biosynthetic process"/>
    <property type="evidence" value="ECO:0007669"/>
    <property type="project" value="UniProtKB-KW"/>
</dbReference>
<dbReference type="FunFam" id="1.10.1040.10:FF:000001">
    <property type="entry name" value="Glycerol-3-phosphate dehydrogenase [NAD(P)+]"/>
    <property type="match status" value="1"/>
</dbReference>
<dbReference type="FunFam" id="3.40.50.720:FF:001174">
    <property type="entry name" value="Glycerol-3-phosphate dehydrogenase [NAD(P)+]"/>
    <property type="match status" value="1"/>
</dbReference>
<dbReference type="Gene3D" id="1.10.1040.10">
    <property type="entry name" value="N-(1-d-carboxylethyl)-l-norvaline Dehydrogenase, domain 2"/>
    <property type="match status" value="1"/>
</dbReference>
<dbReference type="Gene3D" id="3.40.50.720">
    <property type="entry name" value="NAD(P)-binding Rossmann-like Domain"/>
    <property type="match status" value="2"/>
</dbReference>
<dbReference type="HAMAP" id="MF_00394">
    <property type="entry name" value="NAD_Glyc3P_dehydrog"/>
    <property type="match status" value="1"/>
</dbReference>
<dbReference type="InterPro" id="IPR008927">
    <property type="entry name" value="6-PGluconate_DH-like_C_sf"/>
</dbReference>
<dbReference type="InterPro" id="IPR013328">
    <property type="entry name" value="6PGD_dom2"/>
</dbReference>
<dbReference type="InterPro" id="IPR006168">
    <property type="entry name" value="G3P_DH_NAD-dep"/>
</dbReference>
<dbReference type="InterPro" id="IPR006109">
    <property type="entry name" value="G3P_DH_NAD-dep_C"/>
</dbReference>
<dbReference type="InterPro" id="IPR011128">
    <property type="entry name" value="G3P_DH_NAD-dep_N"/>
</dbReference>
<dbReference type="InterPro" id="IPR036291">
    <property type="entry name" value="NAD(P)-bd_dom_sf"/>
</dbReference>
<dbReference type="NCBIfam" id="NF000940">
    <property type="entry name" value="PRK00094.1-2"/>
    <property type="match status" value="1"/>
</dbReference>
<dbReference type="NCBIfam" id="NF000942">
    <property type="entry name" value="PRK00094.1-4"/>
    <property type="match status" value="1"/>
</dbReference>
<dbReference type="NCBIfam" id="NF011212">
    <property type="entry name" value="PRK14619.1"/>
    <property type="match status" value="1"/>
</dbReference>
<dbReference type="PANTHER" id="PTHR11728">
    <property type="entry name" value="GLYCEROL-3-PHOSPHATE DEHYDROGENASE"/>
    <property type="match status" value="1"/>
</dbReference>
<dbReference type="PANTHER" id="PTHR11728:SF1">
    <property type="entry name" value="GLYCEROL-3-PHOSPHATE DEHYDROGENASE [NAD(+)] 2, CHLOROPLASTIC"/>
    <property type="match status" value="1"/>
</dbReference>
<dbReference type="Pfam" id="PF07479">
    <property type="entry name" value="NAD_Gly3P_dh_C"/>
    <property type="match status" value="1"/>
</dbReference>
<dbReference type="Pfam" id="PF01210">
    <property type="entry name" value="NAD_Gly3P_dh_N"/>
    <property type="match status" value="2"/>
</dbReference>
<dbReference type="PIRSF" id="PIRSF000114">
    <property type="entry name" value="Glycerol-3-P_dh"/>
    <property type="match status" value="1"/>
</dbReference>
<dbReference type="PRINTS" id="PR00077">
    <property type="entry name" value="GPDHDRGNASE"/>
</dbReference>
<dbReference type="SUPFAM" id="SSF48179">
    <property type="entry name" value="6-phosphogluconate dehydrogenase C-terminal domain-like"/>
    <property type="match status" value="1"/>
</dbReference>
<dbReference type="SUPFAM" id="SSF51735">
    <property type="entry name" value="NAD(P)-binding Rossmann-fold domains"/>
    <property type="match status" value="1"/>
</dbReference>
<dbReference type="PROSITE" id="PS00957">
    <property type="entry name" value="NAD_G3PDH"/>
    <property type="match status" value="1"/>
</dbReference>
<proteinExistence type="inferred from homology"/>
<accession>Q7NF59</accession>
<name>GPDA_GLOVI</name>
<gene>
    <name evidence="1" type="primary">gpsA</name>
    <name type="ordered locus">glr3667</name>
</gene>
<evidence type="ECO:0000255" key="1">
    <source>
        <dbReference type="HAMAP-Rule" id="MF_00394"/>
    </source>
</evidence>
<feature type="chain" id="PRO_0000137967" description="Glycerol-3-phosphate dehydrogenase [NAD(P)+]">
    <location>
        <begin position="1"/>
        <end position="305"/>
    </location>
</feature>
<feature type="active site" description="Proton acceptor" evidence="1">
    <location>
        <position position="162"/>
    </location>
</feature>
<feature type="binding site" evidence="1">
    <location>
        <position position="11"/>
    </location>
    <ligand>
        <name>NADPH</name>
        <dbReference type="ChEBI" id="CHEBI:57783"/>
    </ligand>
</feature>
<feature type="binding site" evidence="1">
    <location>
        <position position="31"/>
    </location>
    <ligand>
        <name>NADPH</name>
        <dbReference type="ChEBI" id="CHEBI:57783"/>
    </ligand>
</feature>
<feature type="binding site" evidence="1">
    <location>
        <position position="79"/>
    </location>
    <ligand>
        <name>NADPH</name>
        <dbReference type="ChEBI" id="CHEBI:57783"/>
    </ligand>
</feature>
<feature type="binding site" evidence="1">
    <location>
        <position position="79"/>
    </location>
    <ligand>
        <name>sn-glycerol 3-phosphate</name>
        <dbReference type="ChEBI" id="CHEBI:57597"/>
    </ligand>
</feature>
<feature type="binding site" evidence="1">
    <location>
        <position position="107"/>
    </location>
    <ligand>
        <name>sn-glycerol 3-phosphate</name>
        <dbReference type="ChEBI" id="CHEBI:57597"/>
    </ligand>
</feature>
<feature type="binding site" evidence="1">
    <location>
        <position position="111"/>
    </location>
    <ligand>
        <name>NADPH</name>
        <dbReference type="ChEBI" id="CHEBI:57783"/>
    </ligand>
</feature>
<feature type="binding site" evidence="1">
    <location>
        <position position="162"/>
    </location>
    <ligand>
        <name>sn-glycerol 3-phosphate</name>
        <dbReference type="ChEBI" id="CHEBI:57597"/>
    </ligand>
</feature>
<feature type="binding site" evidence="1">
    <location>
        <position position="215"/>
    </location>
    <ligand>
        <name>sn-glycerol 3-phosphate</name>
        <dbReference type="ChEBI" id="CHEBI:57597"/>
    </ligand>
</feature>
<feature type="binding site" evidence="1">
    <location>
        <position position="225"/>
    </location>
    <ligand>
        <name>sn-glycerol 3-phosphate</name>
        <dbReference type="ChEBI" id="CHEBI:57597"/>
    </ligand>
</feature>
<feature type="binding site" evidence="1">
    <location>
        <position position="226"/>
    </location>
    <ligand>
        <name>NADPH</name>
        <dbReference type="ChEBI" id="CHEBI:57783"/>
    </ligand>
</feature>
<feature type="binding site" evidence="1">
    <location>
        <position position="226"/>
    </location>
    <ligand>
        <name>sn-glycerol 3-phosphate</name>
        <dbReference type="ChEBI" id="CHEBI:57597"/>
    </ligand>
</feature>
<feature type="binding site" evidence="1">
    <location>
        <position position="227"/>
    </location>
    <ligand>
        <name>sn-glycerol 3-phosphate</name>
        <dbReference type="ChEBI" id="CHEBI:57597"/>
    </ligand>
</feature>
<feature type="binding site" evidence="1">
    <location>
        <position position="252"/>
    </location>
    <ligand>
        <name>NADPH</name>
        <dbReference type="ChEBI" id="CHEBI:57783"/>
    </ligand>
</feature>
<sequence>MRIAVLGGGAWGTTLADLAAAQDHQVRVWSRSGALALGEVLAQAEAVFSCLPMAAVAGVIDQVIALGLPAGVIVVNATKGLDRRTARPASSLWQARFADHPLVVLSGPNLAAEIRAGLPAATVVASADGQAAGRIQQCLASERFRVYTSADWRGVELGGVLKNVIAIAAGVSDGLGLGANAKAALITRGLAEMIRVGTHWGGLAETFYGLSGLGDLLTTCNSPLSRNYQVGFGLGKGQSLEAVLERLEGTAEGVATAAILAEYAQRSALEVPITDQICAVLGGLRPPTEALAALMTRRLREEDGG</sequence>
<reference key="1">
    <citation type="journal article" date="2003" name="DNA Res.">
        <title>Complete genome structure of Gloeobacter violaceus PCC 7421, a cyanobacterium that lacks thylakoids.</title>
        <authorList>
            <person name="Nakamura Y."/>
            <person name="Kaneko T."/>
            <person name="Sato S."/>
            <person name="Mimuro M."/>
            <person name="Miyashita H."/>
            <person name="Tsuchiya T."/>
            <person name="Sasamoto S."/>
            <person name="Watanabe A."/>
            <person name="Kawashima K."/>
            <person name="Kishida Y."/>
            <person name="Kiyokawa C."/>
            <person name="Kohara M."/>
            <person name="Matsumoto M."/>
            <person name="Matsuno A."/>
            <person name="Nakazaki N."/>
            <person name="Shimpo S."/>
            <person name="Takeuchi C."/>
            <person name="Yamada M."/>
            <person name="Tabata S."/>
        </authorList>
    </citation>
    <scope>NUCLEOTIDE SEQUENCE [LARGE SCALE GENOMIC DNA]</scope>
    <source>
        <strain>ATCC 29082 / PCC 7421</strain>
    </source>
</reference>
<keyword id="KW-0963">Cytoplasm</keyword>
<keyword id="KW-0444">Lipid biosynthesis</keyword>
<keyword id="KW-0443">Lipid metabolism</keyword>
<keyword id="KW-0520">NAD</keyword>
<keyword id="KW-0521">NADP</keyword>
<keyword id="KW-0547">Nucleotide-binding</keyword>
<keyword id="KW-0560">Oxidoreductase</keyword>
<keyword id="KW-0594">Phospholipid biosynthesis</keyword>
<keyword id="KW-1208">Phospholipid metabolism</keyword>
<keyword id="KW-1185">Reference proteome</keyword>
<comment type="function">
    <text evidence="1">Catalyzes the reduction of the glycolytic intermediate dihydroxyacetone phosphate (DHAP) to sn-glycerol 3-phosphate (G3P), the key precursor for phospholipid synthesis.</text>
</comment>
<comment type="catalytic activity">
    <reaction evidence="1">
        <text>sn-glycerol 3-phosphate + NAD(+) = dihydroxyacetone phosphate + NADH + H(+)</text>
        <dbReference type="Rhea" id="RHEA:11092"/>
        <dbReference type="ChEBI" id="CHEBI:15378"/>
        <dbReference type="ChEBI" id="CHEBI:57540"/>
        <dbReference type="ChEBI" id="CHEBI:57597"/>
        <dbReference type="ChEBI" id="CHEBI:57642"/>
        <dbReference type="ChEBI" id="CHEBI:57945"/>
        <dbReference type="EC" id="1.1.1.94"/>
    </reaction>
    <physiologicalReaction direction="right-to-left" evidence="1">
        <dbReference type="Rhea" id="RHEA:11094"/>
    </physiologicalReaction>
</comment>
<comment type="catalytic activity">
    <reaction evidence="1">
        <text>sn-glycerol 3-phosphate + NADP(+) = dihydroxyacetone phosphate + NADPH + H(+)</text>
        <dbReference type="Rhea" id="RHEA:11096"/>
        <dbReference type="ChEBI" id="CHEBI:15378"/>
        <dbReference type="ChEBI" id="CHEBI:57597"/>
        <dbReference type="ChEBI" id="CHEBI:57642"/>
        <dbReference type="ChEBI" id="CHEBI:57783"/>
        <dbReference type="ChEBI" id="CHEBI:58349"/>
        <dbReference type="EC" id="1.1.1.94"/>
    </reaction>
    <physiologicalReaction direction="right-to-left" evidence="1">
        <dbReference type="Rhea" id="RHEA:11098"/>
    </physiologicalReaction>
</comment>
<comment type="pathway">
    <text evidence="1">Membrane lipid metabolism; glycerophospholipid metabolism.</text>
</comment>
<comment type="subcellular location">
    <subcellularLocation>
        <location evidence="1">Cytoplasm</location>
    </subcellularLocation>
</comment>
<comment type="similarity">
    <text evidence="1">Belongs to the NAD-dependent glycerol-3-phosphate dehydrogenase family.</text>
</comment>